<organism>
    <name type="scientific">Streptococcus equi subsp. equi (strain 4047)</name>
    <dbReference type="NCBI Taxonomy" id="553482"/>
    <lineage>
        <taxon>Bacteria</taxon>
        <taxon>Bacillati</taxon>
        <taxon>Bacillota</taxon>
        <taxon>Bacilli</taxon>
        <taxon>Lactobacillales</taxon>
        <taxon>Streptococcaceae</taxon>
        <taxon>Streptococcus</taxon>
    </lineage>
</organism>
<proteinExistence type="inferred from homology"/>
<protein>
    <recommendedName>
        <fullName>Putative dihydroorotate dehydrogenase A (fumarate)</fullName>
        <shortName>DHOD A</shortName>
        <shortName>DHODase A</shortName>
        <shortName>DHOdehase A</shortName>
        <ecNumber>1.3.98.1</ecNumber>
    </recommendedName>
</protein>
<evidence type="ECO:0000250" key="1"/>
<evidence type="ECO:0000305" key="2"/>
<comment type="function">
    <text evidence="1">Catalyzes the conversion of dihydroorotate to orotate with fumarate as the electron acceptor.</text>
</comment>
<comment type="catalytic activity">
    <reaction>
        <text>(S)-dihydroorotate + fumarate = orotate + succinate</text>
        <dbReference type="Rhea" id="RHEA:30059"/>
        <dbReference type="ChEBI" id="CHEBI:29806"/>
        <dbReference type="ChEBI" id="CHEBI:30031"/>
        <dbReference type="ChEBI" id="CHEBI:30839"/>
        <dbReference type="ChEBI" id="CHEBI:30864"/>
        <dbReference type="EC" id="1.3.98.1"/>
    </reaction>
</comment>
<comment type="cofactor">
    <cofactor evidence="1">
        <name>FMN</name>
        <dbReference type="ChEBI" id="CHEBI:58210"/>
    </cofactor>
    <text evidence="1">Binds 1 FMN per subunit.</text>
</comment>
<comment type="pathway">
    <text>Pyrimidine metabolism; UMP biosynthesis via de novo pathway.</text>
</comment>
<comment type="subunit">
    <text evidence="1">Homodimer.</text>
</comment>
<comment type="subcellular location">
    <subcellularLocation>
        <location evidence="1">Cytoplasm</location>
    </subcellularLocation>
</comment>
<comment type="similarity">
    <text evidence="2">Belongs to the dihydroorotate dehydrogenase family. Type 1 subfamily.</text>
</comment>
<accession>C0M8R7</accession>
<keyword id="KW-0963">Cytoplasm</keyword>
<keyword id="KW-0285">Flavoprotein</keyword>
<keyword id="KW-0288">FMN</keyword>
<keyword id="KW-0560">Oxidoreductase</keyword>
<keyword id="KW-0665">Pyrimidine biosynthesis</keyword>
<sequence>MVSTATKIATFAFNNCLMNAAGVYCMTKEELLAIEASEAGSFVTKTGTLAPRQGNPEPRYADTALGSINSMGLPNHGYQYYLDIVTEMQKDQASKHHFLSVVGMSAEETETILKAIQASDYQGLVELNLSCPNVPGKPQLAYDFEATDQLLKKIFSYYTKPLGIKLPPYFDIVHFDQAAAIFNQYPLAFANCVNSIGNGLVIDDEQVVIKPKNGFGGIGGDYIKPTALANVHAFYQRLNSSIQIIGTGGVKTGRDAFEHILCGAAMVQIGTALHQEGPAIFKRITKELQDIMAEKGYQTLDDFRGQLQYKP</sequence>
<feature type="chain" id="PRO_1000195052" description="Putative dihydroorotate dehydrogenase A (fumarate)">
    <location>
        <begin position="1"/>
        <end position="311"/>
    </location>
</feature>
<feature type="active site" description="Nucleophile">
    <location>
        <position position="131"/>
    </location>
</feature>
<feature type="binding site" evidence="1">
    <location>
        <begin position="45"/>
        <end position="46"/>
    </location>
    <ligand>
        <name>FMN</name>
        <dbReference type="ChEBI" id="CHEBI:58210"/>
    </ligand>
</feature>
<feature type="binding site" evidence="1">
    <location>
        <position position="45"/>
    </location>
    <ligand>
        <name>substrate</name>
    </ligand>
</feature>
<feature type="binding site" evidence="1">
    <location>
        <begin position="69"/>
        <end position="73"/>
    </location>
    <ligand>
        <name>substrate</name>
    </ligand>
</feature>
<feature type="binding site" evidence="1">
    <location>
        <position position="128"/>
    </location>
    <ligand>
        <name>FMN</name>
        <dbReference type="ChEBI" id="CHEBI:58210"/>
    </ligand>
</feature>
<feature type="binding site" evidence="1">
    <location>
        <position position="128"/>
    </location>
    <ligand>
        <name>substrate</name>
    </ligand>
</feature>
<feature type="binding site" evidence="1">
    <location>
        <position position="165"/>
    </location>
    <ligand>
        <name>FMN</name>
        <dbReference type="ChEBI" id="CHEBI:58210"/>
    </ligand>
</feature>
<feature type="binding site" evidence="1">
    <location>
        <position position="193"/>
    </location>
    <ligand>
        <name>FMN</name>
        <dbReference type="ChEBI" id="CHEBI:58210"/>
    </ligand>
</feature>
<feature type="binding site" evidence="1">
    <location>
        <begin position="194"/>
        <end position="195"/>
    </location>
    <ligand>
        <name>substrate</name>
    </ligand>
</feature>
<feature type="binding site" evidence="1">
    <location>
        <position position="220"/>
    </location>
    <ligand>
        <name>FMN</name>
        <dbReference type="ChEBI" id="CHEBI:58210"/>
    </ligand>
</feature>
<feature type="binding site" evidence="1">
    <location>
        <begin position="248"/>
        <end position="249"/>
    </location>
    <ligand>
        <name>FMN</name>
        <dbReference type="ChEBI" id="CHEBI:58210"/>
    </ligand>
</feature>
<feature type="binding site" evidence="1">
    <location>
        <begin position="270"/>
        <end position="271"/>
    </location>
    <ligand>
        <name>FMN</name>
        <dbReference type="ChEBI" id="CHEBI:58210"/>
    </ligand>
</feature>
<name>PYRDA_STRE4</name>
<dbReference type="EC" id="1.3.98.1"/>
<dbReference type="EMBL" id="FM204883">
    <property type="protein sequence ID" value="CAW92981.1"/>
    <property type="molecule type" value="Genomic_DNA"/>
</dbReference>
<dbReference type="RefSeq" id="WP_012679196.1">
    <property type="nucleotide sequence ID" value="NC_012471.1"/>
</dbReference>
<dbReference type="SMR" id="C0M8R7"/>
<dbReference type="KEGG" id="seu:SEQ_0655"/>
<dbReference type="HOGENOM" id="CLU_042042_3_0_9"/>
<dbReference type="OrthoDB" id="9794954at2"/>
<dbReference type="UniPathway" id="UPA00070"/>
<dbReference type="Proteomes" id="UP000001365">
    <property type="component" value="Chromosome"/>
</dbReference>
<dbReference type="GO" id="GO:0005737">
    <property type="term" value="C:cytoplasm"/>
    <property type="evidence" value="ECO:0007669"/>
    <property type="project" value="UniProtKB-SubCell"/>
</dbReference>
<dbReference type="GO" id="GO:1990663">
    <property type="term" value="F:dihydroorotate dehydrogenase (fumarate) activity"/>
    <property type="evidence" value="ECO:0007669"/>
    <property type="project" value="UniProtKB-EC"/>
</dbReference>
<dbReference type="GO" id="GO:0006207">
    <property type="term" value="P:'de novo' pyrimidine nucleobase biosynthetic process"/>
    <property type="evidence" value="ECO:0007669"/>
    <property type="project" value="InterPro"/>
</dbReference>
<dbReference type="GO" id="GO:0044205">
    <property type="term" value="P:'de novo' UMP biosynthetic process"/>
    <property type="evidence" value="ECO:0007669"/>
    <property type="project" value="UniProtKB-UniRule"/>
</dbReference>
<dbReference type="CDD" id="cd04741">
    <property type="entry name" value="DHOD_1A_like"/>
    <property type="match status" value="1"/>
</dbReference>
<dbReference type="FunFam" id="3.20.20.70:FF:000027">
    <property type="entry name" value="Dihydropyrimidine dehydrogenase [NADP(+)]"/>
    <property type="match status" value="1"/>
</dbReference>
<dbReference type="Gene3D" id="3.20.20.70">
    <property type="entry name" value="Aldolase class I"/>
    <property type="match status" value="1"/>
</dbReference>
<dbReference type="HAMAP" id="MF_00224">
    <property type="entry name" value="DHO_dh_type1"/>
    <property type="match status" value="1"/>
</dbReference>
<dbReference type="InterPro" id="IPR013785">
    <property type="entry name" value="Aldolase_TIM"/>
</dbReference>
<dbReference type="InterPro" id="IPR050074">
    <property type="entry name" value="DHO_dehydrogenase"/>
</dbReference>
<dbReference type="InterPro" id="IPR033886">
    <property type="entry name" value="DHOD_1A"/>
</dbReference>
<dbReference type="InterPro" id="IPR024920">
    <property type="entry name" value="Dihydroorotate_DH_1"/>
</dbReference>
<dbReference type="InterPro" id="IPR012135">
    <property type="entry name" value="Dihydroorotate_DH_1_2"/>
</dbReference>
<dbReference type="InterPro" id="IPR005720">
    <property type="entry name" value="Dihydroorotate_DH_cat"/>
</dbReference>
<dbReference type="InterPro" id="IPR001295">
    <property type="entry name" value="Dihydroorotate_DH_CS"/>
</dbReference>
<dbReference type="NCBIfam" id="NF002702">
    <property type="entry name" value="PRK02506.1"/>
    <property type="match status" value="1"/>
</dbReference>
<dbReference type="PANTHER" id="PTHR48109:SF1">
    <property type="entry name" value="DIHYDROOROTATE DEHYDROGENASE (FUMARATE)"/>
    <property type="match status" value="1"/>
</dbReference>
<dbReference type="PANTHER" id="PTHR48109">
    <property type="entry name" value="DIHYDROOROTATE DEHYDROGENASE (QUINONE), MITOCHONDRIAL-RELATED"/>
    <property type="match status" value="1"/>
</dbReference>
<dbReference type="Pfam" id="PF01180">
    <property type="entry name" value="DHO_dh"/>
    <property type="match status" value="1"/>
</dbReference>
<dbReference type="PIRSF" id="PIRSF000164">
    <property type="entry name" value="DHO_oxidase"/>
    <property type="match status" value="1"/>
</dbReference>
<dbReference type="SUPFAM" id="SSF51395">
    <property type="entry name" value="FMN-linked oxidoreductases"/>
    <property type="match status" value="1"/>
</dbReference>
<dbReference type="PROSITE" id="PS00912">
    <property type="entry name" value="DHODEHASE_2"/>
    <property type="match status" value="1"/>
</dbReference>
<gene>
    <name type="primary">pyrD</name>
    <name type="ordered locus">SEQ_0655</name>
</gene>
<reference key="1">
    <citation type="journal article" date="2009" name="PLoS Pathog.">
        <title>Genomic evidence for the evolution of Streptococcus equi: host restriction, increased virulence, and genetic exchange with human pathogens.</title>
        <authorList>
            <person name="Holden M.T.G."/>
            <person name="Heather Z."/>
            <person name="Paillot R."/>
            <person name="Steward K.F."/>
            <person name="Webb K."/>
            <person name="Ainslie F."/>
            <person name="Jourdan T."/>
            <person name="Bason N.C."/>
            <person name="Holroyd N.E."/>
            <person name="Mungall K."/>
            <person name="Quail M.A."/>
            <person name="Sanders M."/>
            <person name="Simmonds M."/>
            <person name="Willey D."/>
            <person name="Brooks K."/>
            <person name="Aanensen D.M."/>
            <person name="Spratt B.G."/>
            <person name="Jolley K.A."/>
            <person name="Maiden M.C.J."/>
            <person name="Kehoe M."/>
            <person name="Chanter N."/>
            <person name="Bentley S.D."/>
            <person name="Robinson C."/>
            <person name="Maskell D.J."/>
            <person name="Parkhill J."/>
            <person name="Waller A.S."/>
        </authorList>
    </citation>
    <scope>NUCLEOTIDE SEQUENCE [LARGE SCALE GENOMIC DNA]</scope>
    <source>
        <strain>4047</strain>
    </source>
</reference>